<reference key="1">
    <citation type="journal article" date="2007" name="Science">
        <title>The Fusarium graminearum genome reveals a link between localized polymorphism and pathogen specialization.</title>
        <authorList>
            <person name="Cuomo C.A."/>
            <person name="Gueldener U."/>
            <person name="Xu J.-R."/>
            <person name="Trail F."/>
            <person name="Turgeon B.G."/>
            <person name="Di Pietro A."/>
            <person name="Walton J.D."/>
            <person name="Ma L.-J."/>
            <person name="Baker S.E."/>
            <person name="Rep M."/>
            <person name="Adam G."/>
            <person name="Antoniw J."/>
            <person name="Baldwin T."/>
            <person name="Calvo S.E."/>
            <person name="Chang Y.-L."/>
            <person name="DeCaprio D."/>
            <person name="Gale L.R."/>
            <person name="Gnerre S."/>
            <person name="Goswami R.S."/>
            <person name="Hammond-Kosack K."/>
            <person name="Harris L.J."/>
            <person name="Hilburn K."/>
            <person name="Kennell J.C."/>
            <person name="Kroken S."/>
            <person name="Magnuson J.K."/>
            <person name="Mannhaupt G."/>
            <person name="Mauceli E.W."/>
            <person name="Mewes H.-W."/>
            <person name="Mitterbauer R."/>
            <person name="Muehlbauer G."/>
            <person name="Muensterkoetter M."/>
            <person name="Nelson D."/>
            <person name="O'Donnell K."/>
            <person name="Ouellet T."/>
            <person name="Qi W."/>
            <person name="Quesneville H."/>
            <person name="Roncero M.I.G."/>
            <person name="Seong K.-Y."/>
            <person name="Tetko I.V."/>
            <person name="Urban M."/>
            <person name="Waalwijk C."/>
            <person name="Ward T.J."/>
            <person name="Yao J."/>
            <person name="Birren B.W."/>
            <person name="Kistler H.C."/>
        </authorList>
    </citation>
    <scope>NUCLEOTIDE SEQUENCE [LARGE SCALE GENOMIC DNA]</scope>
    <source>
        <strain>ATCC MYA-4620 / CBS 123657 / FGSC 9075 / NRRL 31084 / PH-1</strain>
    </source>
</reference>
<reference key="2">
    <citation type="journal article" date="2010" name="Nature">
        <title>Comparative genomics reveals mobile pathogenicity chromosomes in Fusarium.</title>
        <authorList>
            <person name="Ma L.-J."/>
            <person name="van der Does H.C."/>
            <person name="Borkovich K.A."/>
            <person name="Coleman J.J."/>
            <person name="Daboussi M.-J."/>
            <person name="Di Pietro A."/>
            <person name="Dufresne M."/>
            <person name="Freitag M."/>
            <person name="Grabherr M."/>
            <person name="Henrissat B."/>
            <person name="Houterman P.M."/>
            <person name="Kang S."/>
            <person name="Shim W.-B."/>
            <person name="Woloshuk C."/>
            <person name="Xie X."/>
            <person name="Xu J.-R."/>
            <person name="Antoniw J."/>
            <person name="Baker S.E."/>
            <person name="Bluhm B.H."/>
            <person name="Breakspear A."/>
            <person name="Brown D.W."/>
            <person name="Butchko R.A.E."/>
            <person name="Chapman S."/>
            <person name="Coulson R."/>
            <person name="Coutinho P.M."/>
            <person name="Danchin E.G.J."/>
            <person name="Diener A."/>
            <person name="Gale L.R."/>
            <person name="Gardiner D.M."/>
            <person name="Goff S."/>
            <person name="Hammond-Kosack K.E."/>
            <person name="Hilburn K."/>
            <person name="Hua-Van A."/>
            <person name="Jonkers W."/>
            <person name="Kazan K."/>
            <person name="Kodira C.D."/>
            <person name="Koehrsen M."/>
            <person name="Kumar L."/>
            <person name="Lee Y.-H."/>
            <person name="Li L."/>
            <person name="Manners J.M."/>
            <person name="Miranda-Saavedra D."/>
            <person name="Mukherjee M."/>
            <person name="Park G."/>
            <person name="Park J."/>
            <person name="Park S.-Y."/>
            <person name="Proctor R.H."/>
            <person name="Regev A."/>
            <person name="Ruiz-Roldan M.C."/>
            <person name="Sain D."/>
            <person name="Sakthikumar S."/>
            <person name="Sykes S."/>
            <person name="Schwartz D.C."/>
            <person name="Turgeon B.G."/>
            <person name="Wapinski I."/>
            <person name="Yoder O."/>
            <person name="Young S."/>
            <person name="Zeng Q."/>
            <person name="Zhou S."/>
            <person name="Galagan J."/>
            <person name="Cuomo C.A."/>
            <person name="Kistler H.C."/>
            <person name="Rep M."/>
        </authorList>
    </citation>
    <scope>GENOME REANNOTATION</scope>
    <source>
        <strain>ATCC MYA-4620 / CBS 123657 / FGSC 9075 / NRRL 31084 / PH-1</strain>
    </source>
</reference>
<reference key="3">
    <citation type="journal article" date="2015" name="BMC Genomics">
        <title>The completed genome sequence of the pathogenic ascomycete fungus Fusarium graminearum.</title>
        <authorList>
            <person name="King R."/>
            <person name="Urban M."/>
            <person name="Hammond-Kosack M.C.U."/>
            <person name="Hassani-Pak K."/>
            <person name="Hammond-Kosack K.E."/>
        </authorList>
    </citation>
    <scope>NUCLEOTIDE SEQUENCE [LARGE SCALE GENOMIC DNA]</scope>
    <source>
        <strain>ATCC MYA-4620 / CBS 123657 / FGSC 9075 / NRRL 31084 / PH-1</strain>
    </source>
</reference>
<organism>
    <name type="scientific">Gibberella zeae (strain ATCC MYA-4620 / CBS 123657 / FGSC 9075 / NRRL 31084 / PH-1)</name>
    <name type="common">Wheat head blight fungus</name>
    <name type="synonym">Fusarium graminearum</name>
    <dbReference type="NCBI Taxonomy" id="229533"/>
    <lineage>
        <taxon>Eukaryota</taxon>
        <taxon>Fungi</taxon>
        <taxon>Dikarya</taxon>
        <taxon>Ascomycota</taxon>
        <taxon>Pezizomycotina</taxon>
        <taxon>Sordariomycetes</taxon>
        <taxon>Hypocreomycetidae</taxon>
        <taxon>Hypocreales</taxon>
        <taxon>Nectriaceae</taxon>
        <taxon>Fusarium</taxon>
    </lineage>
</organism>
<protein>
    <recommendedName>
        <fullName>Palmitoyltransferase ERF2</fullName>
        <ecNumber evidence="2">2.3.1.225</ecNumber>
    </recommendedName>
    <alternativeName>
        <fullName>DHHC cysteine-rich domain-containing protein ERF2</fullName>
    </alternativeName>
    <alternativeName>
        <fullName>Ras protein acyltransferase</fullName>
    </alternativeName>
</protein>
<gene>
    <name type="primary">ERF2</name>
    <name type="ORF">FGRRES_08531</name>
    <name type="ORF">FGSG_08531</name>
</gene>
<proteinExistence type="inferred from homology"/>
<name>ERFB_GIBZE</name>
<feature type="chain" id="PRO_0000212943" description="Palmitoyltransferase ERF2">
    <location>
        <begin position="1"/>
        <end position="679"/>
    </location>
</feature>
<feature type="topological domain" description="Cytoplasmic" evidence="4">
    <location>
        <begin position="1"/>
        <end position="368"/>
    </location>
</feature>
<feature type="transmembrane region" description="Helical" evidence="4">
    <location>
        <begin position="369"/>
        <end position="389"/>
    </location>
</feature>
<feature type="topological domain" description="Lumenal" evidence="4">
    <location>
        <begin position="390"/>
        <end position="393"/>
    </location>
</feature>
<feature type="transmembrane region" description="Helical" evidence="4">
    <location>
        <begin position="394"/>
        <end position="414"/>
    </location>
</feature>
<feature type="topological domain" description="Cytoplasmic" evidence="4">
    <location>
        <begin position="415"/>
        <end position="511"/>
    </location>
</feature>
<feature type="transmembrane region" description="Helical" evidence="4">
    <location>
        <begin position="512"/>
        <end position="532"/>
    </location>
</feature>
<feature type="topological domain" description="Lumenal" evidence="4">
    <location>
        <begin position="533"/>
        <end position="554"/>
    </location>
</feature>
<feature type="transmembrane region" description="Helical" evidence="4">
    <location>
        <begin position="555"/>
        <end position="575"/>
    </location>
</feature>
<feature type="topological domain" description="Cytoplasmic" evidence="4">
    <location>
        <begin position="576"/>
        <end position="679"/>
    </location>
</feature>
<feature type="domain" description="DHHC" evidence="5">
    <location>
        <begin position="468"/>
        <end position="518"/>
    </location>
</feature>
<feature type="region of interest" description="Disordered" evidence="6">
    <location>
        <begin position="1"/>
        <end position="181"/>
    </location>
</feature>
<feature type="region of interest" description="Disordered" evidence="6">
    <location>
        <begin position="194"/>
        <end position="250"/>
    </location>
</feature>
<feature type="region of interest" description="Disordered" evidence="6">
    <location>
        <begin position="267"/>
        <end position="338"/>
    </location>
</feature>
<feature type="region of interest" description="Disordered" evidence="6">
    <location>
        <begin position="640"/>
        <end position="679"/>
    </location>
</feature>
<feature type="compositionally biased region" description="Polar residues" evidence="6">
    <location>
        <begin position="44"/>
        <end position="57"/>
    </location>
</feature>
<feature type="compositionally biased region" description="Polar residues" evidence="6">
    <location>
        <begin position="66"/>
        <end position="82"/>
    </location>
</feature>
<feature type="compositionally biased region" description="Low complexity" evidence="6">
    <location>
        <begin position="103"/>
        <end position="114"/>
    </location>
</feature>
<feature type="compositionally biased region" description="Low complexity" evidence="6">
    <location>
        <begin position="143"/>
        <end position="167"/>
    </location>
</feature>
<feature type="compositionally biased region" description="Polar residues" evidence="6">
    <location>
        <begin position="291"/>
        <end position="301"/>
    </location>
</feature>
<feature type="active site" description="S-palmitoyl cysteine intermediate" evidence="2">
    <location>
        <position position="498"/>
    </location>
</feature>
<dbReference type="EC" id="2.3.1.225" evidence="2"/>
<dbReference type="EMBL" id="DS231667">
    <property type="protein sequence ID" value="ESU14802.1"/>
    <property type="molecule type" value="Genomic_DNA"/>
</dbReference>
<dbReference type="EMBL" id="HG970333">
    <property type="protein sequence ID" value="CEF76897.1"/>
    <property type="molecule type" value="Genomic_DNA"/>
</dbReference>
<dbReference type="RefSeq" id="XP_011320227.1">
    <property type="nucleotide sequence ID" value="XM_011321925.1"/>
</dbReference>
<dbReference type="SMR" id="Q4I2M7"/>
<dbReference type="STRING" id="229533.Q4I2M7"/>
<dbReference type="GeneID" id="23555530"/>
<dbReference type="KEGG" id="fgr:FGSG_08531"/>
<dbReference type="VEuPathDB" id="FungiDB:FGRAMPH1_01G10187"/>
<dbReference type="eggNOG" id="KOG1311">
    <property type="taxonomic scope" value="Eukaryota"/>
</dbReference>
<dbReference type="HOGENOM" id="CLU_021757_0_0_1"/>
<dbReference type="InParanoid" id="Q4I2M7"/>
<dbReference type="OrthoDB" id="66939at110618"/>
<dbReference type="PHI-base" id="PHI:1676"/>
<dbReference type="Proteomes" id="UP000070720">
    <property type="component" value="Chromosome 2"/>
</dbReference>
<dbReference type="GO" id="GO:0005789">
    <property type="term" value="C:endoplasmic reticulum membrane"/>
    <property type="evidence" value="ECO:0007669"/>
    <property type="project" value="UniProtKB-SubCell"/>
</dbReference>
<dbReference type="GO" id="GO:0005794">
    <property type="term" value="C:Golgi apparatus"/>
    <property type="evidence" value="ECO:0007669"/>
    <property type="project" value="TreeGrafter"/>
</dbReference>
<dbReference type="GO" id="GO:0019706">
    <property type="term" value="F:protein-cysteine S-palmitoyltransferase activity"/>
    <property type="evidence" value="ECO:0007669"/>
    <property type="project" value="UniProtKB-EC"/>
</dbReference>
<dbReference type="GO" id="GO:0006612">
    <property type="term" value="P:protein targeting to membrane"/>
    <property type="evidence" value="ECO:0007669"/>
    <property type="project" value="TreeGrafter"/>
</dbReference>
<dbReference type="InterPro" id="IPR001594">
    <property type="entry name" value="Palmitoyltrfase_DHHC"/>
</dbReference>
<dbReference type="InterPro" id="IPR039859">
    <property type="entry name" value="PFA4/ZDH16/20/ERF2-like"/>
</dbReference>
<dbReference type="PANTHER" id="PTHR22883:SF43">
    <property type="entry name" value="PALMITOYLTRANSFERASE APP"/>
    <property type="match status" value="1"/>
</dbReference>
<dbReference type="PANTHER" id="PTHR22883">
    <property type="entry name" value="ZINC FINGER DHHC DOMAIN CONTAINING PROTEIN"/>
    <property type="match status" value="1"/>
</dbReference>
<dbReference type="Pfam" id="PF01529">
    <property type="entry name" value="DHHC"/>
    <property type="match status" value="1"/>
</dbReference>
<dbReference type="PROSITE" id="PS50216">
    <property type="entry name" value="DHHC"/>
    <property type="match status" value="1"/>
</dbReference>
<sequence>MASKPDDDGFLAPYVSRSDAQRPLSIVSSRMTDIASEDGDGPEVQNNRLSIPQSTDMGSRPDTARTGASSSRGPWQSQSLRNKTYLAGVQAKRGSVESSTAGSTSQPPSLSSRSHVPSLQSHAFFRPMSSQKLQAQRGGSHRPSTMSQMSAAASPSSPTSPTSPTSPRSDEHGESSSSQMRQSIISNPIAQLQRQMSNEENMRPPPSRGTEMTEQETLDRITANTSPSHGHYPAGSLTDSVRPLQGMSSDTGHFQHSIIVDKSYKDLSNLPSPIKTPRSFRSSFLMPGRSNDGQLSQNRSTEGAEKLSSAASSPQFRPVDSHNEQQHPRVPYKPSQKSDLGRVHQYFDGNTVFCLGGRWQNTRGRPINIATGIFVVVPCALFFGFEAPWLWNNVSPAIPIVFAYLAYICFSSFIHASVTDPGILPRNLHQFPPVDDDDDPLQLSPPTTDWALIKSAESTTAAMEVPVKHCRTCNIWRPPRAHHCRLCDNCIETHDHHCVWLNNCVGKRNYRYFFTFVTSATVLAAYLIATSLTQILLYRNRQGISFGQAVDHFRVPFALVFLGFITFLYPAALMGYHIFLMARGETTREYMNSHKFAKKERFRAFSQASVFKNFIVVLCRPRQPTYYQFKAHYHEGDQRLGIRRDKRPRSSSQGLEMHDVNPGSSGFQGPVSLRNDTPH</sequence>
<keyword id="KW-0012">Acyltransferase</keyword>
<keyword id="KW-0256">Endoplasmic reticulum</keyword>
<keyword id="KW-0449">Lipoprotein</keyword>
<keyword id="KW-0472">Membrane</keyword>
<keyword id="KW-0564">Palmitate</keyword>
<keyword id="KW-1185">Reference proteome</keyword>
<keyword id="KW-0808">Transferase</keyword>
<keyword id="KW-0812">Transmembrane</keyword>
<keyword id="KW-1133">Transmembrane helix</keyword>
<accession>Q4I2M7</accession>
<accession>A0A098DEP0</accession>
<accession>A0A0E0S072</accession>
<accession>V6RLF6</accession>
<evidence type="ECO:0000250" key="1">
    <source>
        <dbReference type="UniProtKB" id="Q06551"/>
    </source>
</evidence>
<evidence type="ECO:0000250" key="2">
    <source>
        <dbReference type="UniProtKB" id="Q8VDZ4"/>
    </source>
</evidence>
<evidence type="ECO:0000250" key="3">
    <source>
        <dbReference type="UniProtKB" id="Q9UIJ5"/>
    </source>
</evidence>
<evidence type="ECO:0000255" key="4"/>
<evidence type="ECO:0000255" key="5">
    <source>
        <dbReference type="PROSITE-ProRule" id="PRU00067"/>
    </source>
</evidence>
<evidence type="ECO:0000256" key="6">
    <source>
        <dbReference type="SAM" id="MobiDB-lite"/>
    </source>
</evidence>
<evidence type="ECO:0000305" key="7"/>
<comment type="function">
    <text evidence="1">Palmitoyltransferase specific for Ras proteins.</text>
</comment>
<comment type="catalytic activity">
    <reaction evidence="2">
        <text>L-cysteinyl-[protein] + hexadecanoyl-CoA = S-hexadecanoyl-L-cysteinyl-[protein] + CoA</text>
        <dbReference type="Rhea" id="RHEA:36683"/>
        <dbReference type="Rhea" id="RHEA-COMP:10131"/>
        <dbReference type="Rhea" id="RHEA-COMP:11032"/>
        <dbReference type="ChEBI" id="CHEBI:29950"/>
        <dbReference type="ChEBI" id="CHEBI:57287"/>
        <dbReference type="ChEBI" id="CHEBI:57379"/>
        <dbReference type="ChEBI" id="CHEBI:74151"/>
        <dbReference type="EC" id="2.3.1.225"/>
    </reaction>
</comment>
<comment type="subcellular location">
    <subcellularLocation>
        <location evidence="1">Endoplasmic reticulum membrane</location>
        <topology evidence="1">Multi-pass membrane protein</topology>
    </subcellularLocation>
</comment>
<comment type="domain">
    <text evidence="1">The DHHC domain is required for palmitoyltransferase activity.</text>
</comment>
<comment type="PTM">
    <text evidence="3">Autopalmitoylated.</text>
</comment>
<comment type="similarity">
    <text evidence="7">Belongs to the DHHC palmitoyltransferase family. ERF2/ZDHHC9 subfamily.</text>
</comment>